<accession>Q8FYZ5</accession>
<accession>G0K6X2</accession>
<proteinExistence type="inferred from homology"/>
<protein>
    <recommendedName>
        <fullName evidence="1">Elongation factor P</fullName>
        <shortName evidence="1">EF-P</shortName>
    </recommendedName>
</protein>
<dbReference type="EMBL" id="AE014291">
    <property type="protein sequence ID" value="AAN30610.1"/>
    <property type="molecule type" value="Genomic_DNA"/>
</dbReference>
<dbReference type="EMBL" id="CP002997">
    <property type="protein sequence ID" value="AEM19027.1"/>
    <property type="molecule type" value="Genomic_DNA"/>
</dbReference>
<dbReference type="RefSeq" id="WP_004689213.1">
    <property type="nucleotide sequence ID" value="NZ_KN046804.1"/>
</dbReference>
<dbReference type="SMR" id="Q8FYZ5"/>
<dbReference type="GeneID" id="97533137"/>
<dbReference type="KEGG" id="bms:BR1710"/>
<dbReference type="KEGG" id="bsi:BS1330_I1704"/>
<dbReference type="PATRIC" id="fig|204722.21.peg.2387"/>
<dbReference type="HOGENOM" id="CLU_074944_1_1_5"/>
<dbReference type="PhylomeDB" id="Q8FYZ5"/>
<dbReference type="UniPathway" id="UPA00345"/>
<dbReference type="Proteomes" id="UP000007104">
    <property type="component" value="Chromosome I"/>
</dbReference>
<dbReference type="GO" id="GO:0005737">
    <property type="term" value="C:cytoplasm"/>
    <property type="evidence" value="ECO:0007669"/>
    <property type="project" value="UniProtKB-SubCell"/>
</dbReference>
<dbReference type="GO" id="GO:0003746">
    <property type="term" value="F:translation elongation factor activity"/>
    <property type="evidence" value="ECO:0007669"/>
    <property type="project" value="UniProtKB-UniRule"/>
</dbReference>
<dbReference type="GO" id="GO:0043043">
    <property type="term" value="P:peptide biosynthetic process"/>
    <property type="evidence" value="ECO:0007669"/>
    <property type="project" value="InterPro"/>
</dbReference>
<dbReference type="CDD" id="cd04470">
    <property type="entry name" value="S1_EF-P_repeat_1"/>
    <property type="match status" value="1"/>
</dbReference>
<dbReference type="CDD" id="cd05794">
    <property type="entry name" value="S1_EF-P_repeat_2"/>
    <property type="match status" value="1"/>
</dbReference>
<dbReference type="FunFam" id="2.30.30.30:FF:000003">
    <property type="entry name" value="Elongation factor P"/>
    <property type="match status" value="1"/>
</dbReference>
<dbReference type="FunFam" id="2.40.50.140:FF:000004">
    <property type="entry name" value="Elongation factor P"/>
    <property type="match status" value="1"/>
</dbReference>
<dbReference type="FunFam" id="2.40.50.140:FF:000009">
    <property type="entry name" value="Elongation factor P"/>
    <property type="match status" value="1"/>
</dbReference>
<dbReference type="Gene3D" id="2.30.30.30">
    <property type="match status" value="1"/>
</dbReference>
<dbReference type="Gene3D" id="2.40.50.140">
    <property type="entry name" value="Nucleic acid-binding proteins"/>
    <property type="match status" value="2"/>
</dbReference>
<dbReference type="HAMAP" id="MF_00141">
    <property type="entry name" value="EF_P"/>
    <property type="match status" value="1"/>
</dbReference>
<dbReference type="InterPro" id="IPR015365">
    <property type="entry name" value="Elong-fact-P_C"/>
</dbReference>
<dbReference type="InterPro" id="IPR012340">
    <property type="entry name" value="NA-bd_OB-fold"/>
</dbReference>
<dbReference type="InterPro" id="IPR014722">
    <property type="entry name" value="Rib_uL2_dom2"/>
</dbReference>
<dbReference type="InterPro" id="IPR020599">
    <property type="entry name" value="Transl_elong_fac_P/YeiP"/>
</dbReference>
<dbReference type="InterPro" id="IPR013185">
    <property type="entry name" value="Transl_elong_KOW-like"/>
</dbReference>
<dbReference type="InterPro" id="IPR001059">
    <property type="entry name" value="Transl_elong_P/YeiP_cen"/>
</dbReference>
<dbReference type="InterPro" id="IPR013852">
    <property type="entry name" value="Transl_elong_P/YeiP_CS"/>
</dbReference>
<dbReference type="InterPro" id="IPR011768">
    <property type="entry name" value="Transl_elongation_fac_P"/>
</dbReference>
<dbReference type="InterPro" id="IPR008991">
    <property type="entry name" value="Translation_prot_SH3-like_sf"/>
</dbReference>
<dbReference type="NCBIfam" id="TIGR00038">
    <property type="entry name" value="efp"/>
    <property type="match status" value="1"/>
</dbReference>
<dbReference type="NCBIfam" id="NF001810">
    <property type="entry name" value="PRK00529.1"/>
    <property type="match status" value="1"/>
</dbReference>
<dbReference type="PANTHER" id="PTHR30053">
    <property type="entry name" value="ELONGATION FACTOR P"/>
    <property type="match status" value="1"/>
</dbReference>
<dbReference type="PANTHER" id="PTHR30053:SF14">
    <property type="entry name" value="TRANSLATION ELONGATION FACTOR KOW-LIKE DOMAIN-CONTAINING PROTEIN"/>
    <property type="match status" value="1"/>
</dbReference>
<dbReference type="Pfam" id="PF01132">
    <property type="entry name" value="EFP"/>
    <property type="match status" value="1"/>
</dbReference>
<dbReference type="Pfam" id="PF08207">
    <property type="entry name" value="EFP_N"/>
    <property type="match status" value="1"/>
</dbReference>
<dbReference type="Pfam" id="PF09285">
    <property type="entry name" value="Elong-fact-P_C"/>
    <property type="match status" value="1"/>
</dbReference>
<dbReference type="PIRSF" id="PIRSF005901">
    <property type="entry name" value="EF-P"/>
    <property type="match status" value="1"/>
</dbReference>
<dbReference type="SMART" id="SM01185">
    <property type="entry name" value="EFP"/>
    <property type="match status" value="1"/>
</dbReference>
<dbReference type="SMART" id="SM00841">
    <property type="entry name" value="Elong-fact-P_C"/>
    <property type="match status" value="1"/>
</dbReference>
<dbReference type="SUPFAM" id="SSF50249">
    <property type="entry name" value="Nucleic acid-binding proteins"/>
    <property type="match status" value="2"/>
</dbReference>
<dbReference type="SUPFAM" id="SSF50104">
    <property type="entry name" value="Translation proteins SH3-like domain"/>
    <property type="match status" value="1"/>
</dbReference>
<dbReference type="PROSITE" id="PS01275">
    <property type="entry name" value="EFP"/>
    <property type="match status" value="1"/>
</dbReference>
<keyword id="KW-0963">Cytoplasm</keyword>
<keyword id="KW-0251">Elongation factor</keyword>
<keyword id="KW-0648">Protein biosynthesis</keyword>
<evidence type="ECO:0000255" key="1">
    <source>
        <dbReference type="HAMAP-Rule" id="MF_00141"/>
    </source>
</evidence>
<feature type="chain" id="PRO_0000094214" description="Elongation factor P">
    <location>
        <begin position="1"/>
        <end position="186"/>
    </location>
</feature>
<reference key="1">
    <citation type="journal article" date="2002" name="Proc. Natl. Acad. Sci. U.S.A.">
        <title>The Brucella suis genome reveals fundamental similarities between animal and plant pathogens and symbionts.</title>
        <authorList>
            <person name="Paulsen I.T."/>
            <person name="Seshadri R."/>
            <person name="Nelson K.E."/>
            <person name="Eisen J.A."/>
            <person name="Heidelberg J.F."/>
            <person name="Read T.D."/>
            <person name="Dodson R.J."/>
            <person name="Umayam L.A."/>
            <person name="Brinkac L.M."/>
            <person name="Beanan M.J."/>
            <person name="Daugherty S.C."/>
            <person name="DeBoy R.T."/>
            <person name="Durkin A.S."/>
            <person name="Kolonay J.F."/>
            <person name="Madupu R."/>
            <person name="Nelson W.C."/>
            <person name="Ayodeji B."/>
            <person name="Kraul M."/>
            <person name="Shetty J."/>
            <person name="Malek J.A."/>
            <person name="Van Aken S.E."/>
            <person name="Riedmuller S."/>
            <person name="Tettelin H."/>
            <person name="Gill S.R."/>
            <person name="White O."/>
            <person name="Salzberg S.L."/>
            <person name="Hoover D.L."/>
            <person name="Lindler L.E."/>
            <person name="Halling S.M."/>
            <person name="Boyle S.M."/>
            <person name="Fraser C.M."/>
        </authorList>
    </citation>
    <scope>NUCLEOTIDE SEQUENCE [LARGE SCALE GENOMIC DNA]</scope>
    <source>
        <strain>1330</strain>
    </source>
</reference>
<reference key="2">
    <citation type="journal article" date="2011" name="J. Bacteriol.">
        <title>Revised genome sequence of Brucella suis 1330.</title>
        <authorList>
            <person name="Tae H."/>
            <person name="Shallom S."/>
            <person name="Settlage R."/>
            <person name="Preston D."/>
            <person name="Adams L.G."/>
            <person name="Garner H.R."/>
        </authorList>
    </citation>
    <scope>NUCLEOTIDE SEQUENCE [LARGE SCALE GENOMIC DNA]</scope>
    <source>
        <strain>1330</strain>
    </source>
</reference>
<name>EFP_BRUSU</name>
<gene>
    <name evidence="1" type="primary">efp</name>
    <name type="ordered locus">BR1710</name>
    <name type="ordered locus">BS1330_I1704</name>
</gene>
<organism>
    <name type="scientific">Brucella suis biovar 1 (strain 1330)</name>
    <dbReference type="NCBI Taxonomy" id="204722"/>
    <lineage>
        <taxon>Bacteria</taxon>
        <taxon>Pseudomonadati</taxon>
        <taxon>Pseudomonadota</taxon>
        <taxon>Alphaproteobacteria</taxon>
        <taxon>Hyphomicrobiales</taxon>
        <taxon>Brucellaceae</taxon>
        <taxon>Brucella/Ochrobactrum group</taxon>
        <taxon>Brucella</taxon>
    </lineage>
</organism>
<sequence length="186" mass="20730">MKINGNEIRPGNVIEHEGGLWVAVKTNAVKPGKGGAYNQVELKNLINGTKLNERFRAAETVERVRLEQKDFSFLYEQGEALIFMDTETYEQLELQKDFVGDRAAFLQDGMMVTVELYEEKPIGIRLPDQVTLAITEADPVVKGQTAASSYKPAVLENGIRILVPPFIASGERVIVDTNELTYISRA</sequence>
<comment type="function">
    <text evidence="1">Involved in peptide bond synthesis. Stimulates efficient translation and peptide-bond synthesis on native or reconstituted 70S ribosomes in vitro. Probably functions indirectly by altering the affinity of the ribosome for aminoacyl-tRNA, thus increasing their reactivity as acceptors for peptidyl transferase.</text>
</comment>
<comment type="pathway">
    <text evidence="1">Protein biosynthesis; polypeptide chain elongation.</text>
</comment>
<comment type="subcellular location">
    <subcellularLocation>
        <location evidence="1">Cytoplasm</location>
    </subcellularLocation>
</comment>
<comment type="similarity">
    <text evidence="1">Belongs to the elongation factor P family.</text>
</comment>